<accession>B3W7I5</accession>
<name>GAL1_LACCB</name>
<dbReference type="EC" id="2.7.1.6" evidence="1"/>
<dbReference type="EMBL" id="FM177140">
    <property type="protein sequence ID" value="CAQ65855.1"/>
    <property type="molecule type" value="Genomic_DNA"/>
</dbReference>
<dbReference type="SMR" id="B3W7I5"/>
<dbReference type="KEGG" id="lcb:LCABL_07300"/>
<dbReference type="HOGENOM" id="CLU_017814_2_1_9"/>
<dbReference type="UniPathway" id="UPA00214"/>
<dbReference type="GO" id="GO:0005829">
    <property type="term" value="C:cytosol"/>
    <property type="evidence" value="ECO:0007669"/>
    <property type="project" value="TreeGrafter"/>
</dbReference>
<dbReference type="GO" id="GO:0005524">
    <property type="term" value="F:ATP binding"/>
    <property type="evidence" value="ECO:0007669"/>
    <property type="project" value="UniProtKB-UniRule"/>
</dbReference>
<dbReference type="GO" id="GO:0004335">
    <property type="term" value="F:galactokinase activity"/>
    <property type="evidence" value="ECO:0007669"/>
    <property type="project" value="UniProtKB-UniRule"/>
</dbReference>
<dbReference type="GO" id="GO:0000287">
    <property type="term" value="F:magnesium ion binding"/>
    <property type="evidence" value="ECO:0007669"/>
    <property type="project" value="UniProtKB-UniRule"/>
</dbReference>
<dbReference type="GO" id="GO:0006012">
    <property type="term" value="P:galactose metabolic process"/>
    <property type="evidence" value="ECO:0007669"/>
    <property type="project" value="UniProtKB-UniRule"/>
</dbReference>
<dbReference type="FunFam" id="3.30.230.10:FF:000017">
    <property type="entry name" value="Galactokinase"/>
    <property type="match status" value="1"/>
</dbReference>
<dbReference type="FunFam" id="3.30.70.890:FF:000001">
    <property type="entry name" value="Galactokinase"/>
    <property type="match status" value="1"/>
</dbReference>
<dbReference type="Gene3D" id="3.30.230.10">
    <property type="match status" value="1"/>
</dbReference>
<dbReference type="Gene3D" id="3.30.70.890">
    <property type="entry name" value="GHMP kinase, C-terminal domain"/>
    <property type="match status" value="1"/>
</dbReference>
<dbReference type="HAMAP" id="MF_00246">
    <property type="entry name" value="Galactokinase"/>
    <property type="match status" value="1"/>
</dbReference>
<dbReference type="InterPro" id="IPR000705">
    <property type="entry name" value="Galactokinase"/>
</dbReference>
<dbReference type="InterPro" id="IPR022963">
    <property type="entry name" value="Galactokinase_bac"/>
</dbReference>
<dbReference type="InterPro" id="IPR019741">
    <property type="entry name" value="Galactokinase_CS"/>
</dbReference>
<dbReference type="InterPro" id="IPR019539">
    <property type="entry name" value="GalKase_N"/>
</dbReference>
<dbReference type="InterPro" id="IPR013750">
    <property type="entry name" value="GHMP_kinase_C_dom"/>
</dbReference>
<dbReference type="InterPro" id="IPR036554">
    <property type="entry name" value="GHMP_kinase_C_sf"/>
</dbReference>
<dbReference type="InterPro" id="IPR006204">
    <property type="entry name" value="GHMP_kinase_N_dom"/>
</dbReference>
<dbReference type="InterPro" id="IPR006203">
    <property type="entry name" value="GHMP_knse_ATP-bd_CS"/>
</dbReference>
<dbReference type="InterPro" id="IPR006206">
    <property type="entry name" value="Mevalonate/galactokinase"/>
</dbReference>
<dbReference type="InterPro" id="IPR020568">
    <property type="entry name" value="Ribosomal_Su5_D2-typ_SF"/>
</dbReference>
<dbReference type="InterPro" id="IPR014721">
    <property type="entry name" value="Ribsml_uS5_D2-typ_fold_subgr"/>
</dbReference>
<dbReference type="NCBIfam" id="TIGR00131">
    <property type="entry name" value="gal_kin"/>
    <property type="match status" value="1"/>
</dbReference>
<dbReference type="NCBIfam" id="NF003705">
    <property type="entry name" value="PRK05322.1"/>
    <property type="match status" value="1"/>
</dbReference>
<dbReference type="PANTHER" id="PTHR10457:SF7">
    <property type="entry name" value="GALACTOKINASE-RELATED"/>
    <property type="match status" value="1"/>
</dbReference>
<dbReference type="PANTHER" id="PTHR10457">
    <property type="entry name" value="MEVALONATE KINASE/GALACTOKINASE"/>
    <property type="match status" value="1"/>
</dbReference>
<dbReference type="Pfam" id="PF10509">
    <property type="entry name" value="GalKase_gal_bdg"/>
    <property type="match status" value="1"/>
</dbReference>
<dbReference type="Pfam" id="PF08544">
    <property type="entry name" value="GHMP_kinases_C"/>
    <property type="match status" value="1"/>
</dbReference>
<dbReference type="Pfam" id="PF00288">
    <property type="entry name" value="GHMP_kinases_N"/>
    <property type="match status" value="1"/>
</dbReference>
<dbReference type="PIRSF" id="PIRSF000530">
    <property type="entry name" value="Galactokinase"/>
    <property type="match status" value="1"/>
</dbReference>
<dbReference type="PRINTS" id="PR00473">
    <property type="entry name" value="GALCTOKINASE"/>
</dbReference>
<dbReference type="PRINTS" id="PR00959">
    <property type="entry name" value="MEVGALKINASE"/>
</dbReference>
<dbReference type="SUPFAM" id="SSF55060">
    <property type="entry name" value="GHMP Kinase, C-terminal domain"/>
    <property type="match status" value="1"/>
</dbReference>
<dbReference type="SUPFAM" id="SSF54211">
    <property type="entry name" value="Ribosomal protein S5 domain 2-like"/>
    <property type="match status" value="1"/>
</dbReference>
<dbReference type="PROSITE" id="PS00106">
    <property type="entry name" value="GALACTOKINASE"/>
    <property type="match status" value="1"/>
</dbReference>
<dbReference type="PROSITE" id="PS00627">
    <property type="entry name" value="GHMP_KINASES_ATP"/>
    <property type="match status" value="1"/>
</dbReference>
<proteinExistence type="inferred from homology"/>
<protein>
    <recommendedName>
        <fullName evidence="1">Galactokinase</fullName>
        <ecNumber evidence="1">2.7.1.6</ecNumber>
    </recommendedName>
    <alternativeName>
        <fullName evidence="1">Galactose kinase</fullName>
    </alternativeName>
</protein>
<feature type="chain" id="PRO_1000100831" description="Galactokinase">
    <location>
        <begin position="1"/>
        <end position="388"/>
    </location>
</feature>
<feature type="active site" description="Proton acceptor" evidence="1">
    <location>
        <position position="174"/>
    </location>
</feature>
<feature type="binding site" evidence="1">
    <location>
        <begin position="33"/>
        <end position="36"/>
    </location>
    <ligand>
        <name>substrate</name>
    </ligand>
</feature>
<feature type="binding site" evidence="1">
    <location>
        <position position="67"/>
    </location>
    <ligand>
        <name>ATP</name>
        <dbReference type="ChEBI" id="CHEBI:30616"/>
    </ligand>
</feature>
<feature type="binding site" evidence="1">
    <location>
        <begin position="124"/>
        <end position="130"/>
    </location>
    <ligand>
        <name>ATP</name>
        <dbReference type="ChEBI" id="CHEBI:30616"/>
    </ligand>
</feature>
<feature type="binding site" evidence="1">
    <location>
        <position position="130"/>
    </location>
    <ligand>
        <name>Mg(2+)</name>
        <dbReference type="ChEBI" id="CHEBI:18420"/>
    </ligand>
</feature>
<feature type="binding site" evidence="1">
    <location>
        <position position="162"/>
    </location>
    <ligand>
        <name>Mg(2+)</name>
        <dbReference type="ChEBI" id="CHEBI:18420"/>
    </ligand>
</feature>
<feature type="binding site" evidence="1">
    <location>
        <position position="224"/>
    </location>
    <ligand>
        <name>substrate</name>
    </ligand>
</feature>
<feature type="site" description="Transition state stabilizer" evidence="1">
    <location>
        <position position="27"/>
    </location>
</feature>
<reference key="1">
    <citation type="submission" date="2008-06" db="EMBL/GenBank/DDBJ databases">
        <title>Lactobacillus casei BL23 complete genome sequence.</title>
        <authorList>
            <person name="Maze A."/>
            <person name="Boel G."/>
            <person name="Bourand A."/>
            <person name="Loux V."/>
            <person name="Gibrat J.F."/>
            <person name="Zuniga M."/>
            <person name="Hartke A."/>
            <person name="Deutscher J."/>
        </authorList>
    </citation>
    <scope>NUCLEOTIDE SEQUENCE [LARGE SCALE GENOMIC DNA]</scope>
    <source>
        <strain>BL23</strain>
    </source>
</reference>
<organism>
    <name type="scientific">Lacticaseibacillus casei (strain BL23)</name>
    <name type="common">Lactobacillus casei</name>
    <dbReference type="NCBI Taxonomy" id="543734"/>
    <lineage>
        <taxon>Bacteria</taxon>
        <taxon>Bacillati</taxon>
        <taxon>Bacillota</taxon>
        <taxon>Bacilli</taxon>
        <taxon>Lactobacillales</taxon>
        <taxon>Lactobacillaceae</taxon>
        <taxon>Lacticaseibacillus</taxon>
    </lineage>
</organism>
<sequence>MNSTDVTKGFTEQFGKQAEHTFFAPGRINLIGEHTDYNGGHVFPCAISLGTYAAVGTNEDNAFRLYSANFPKVGIIDIPFSDLFQDKRGLWTDYFQGMARVMKTAGANFTHGLNVYINGNLPDGAGLSSSASLEMLVGTILNSLFDGGFEPLELVQFGVKVENDYIGVNSGVMDQFAIEMGRANQATLLDTNTMKYEYLPVEMGDNVIVIMNTNKRRELADSKYNERRSECEKALAMLQKGIEVKSLGQLSEDEFDENTYLIYDPILIKRARHAVFENQRTLKASKALQDGDLKTFGKLVSASGVSLAFDYEVTGIELDTLVTNALKQRGVLGARMTGAGFGGCAIAIVNSADVEDFIDNVGKAYREKIGYDAHFYVADIADGAKQLN</sequence>
<evidence type="ECO:0000255" key="1">
    <source>
        <dbReference type="HAMAP-Rule" id="MF_00246"/>
    </source>
</evidence>
<gene>
    <name evidence="1" type="primary">galK</name>
    <name type="ordered locus">LCABL_07300</name>
</gene>
<comment type="function">
    <text evidence="1">Catalyzes the transfer of the gamma-phosphate of ATP to D-galactose to form alpha-D-galactose-1-phosphate (Gal-1-P).</text>
</comment>
<comment type="catalytic activity">
    <reaction evidence="1">
        <text>alpha-D-galactose + ATP = alpha-D-galactose 1-phosphate + ADP + H(+)</text>
        <dbReference type="Rhea" id="RHEA:13553"/>
        <dbReference type="ChEBI" id="CHEBI:15378"/>
        <dbReference type="ChEBI" id="CHEBI:28061"/>
        <dbReference type="ChEBI" id="CHEBI:30616"/>
        <dbReference type="ChEBI" id="CHEBI:58336"/>
        <dbReference type="ChEBI" id="CHEBI:456216"/>
        <dbReference type="EC" id="2.7.1.6"/>
    </reaction>
</comment>
<comment type="pathway">
    <text evidence="1">Carbohydrate metabolism; galactose metabolism.</text>
</comment>
<comment type="subcellular location">
    <subcellularLocation>
        <location evidence="1">Cytoplasm</location>
    </subcellularLocation>
</comment>
<comment type="similarity">
    <text evidence="1">Belongs to the GHMP kinase family. GalK subfamily.</text>
</comment>
<keyword id="KW-0067">ATP-binding</keyword>
<keyword id="KW-0119">Carbohydrate metabolism</keyword>
<keyword id="KW-0963">Cytoplasm</keyword>
<keyword id="KW-0299">Galactose metabolism</keyword>
<keyword id="KW-0418">Kinase</keyword>
<keyword id="KW-0460">Magnesium</keyword>
<keyword id="KW-0479">Metal-binding</keyword>
<keyword id="KW-0547">Nucleotide-binding</keyword>
<keyword id="KW-0808">Transferase</keyword>